<protein>
    <recommendedName>
        <fullName>Hydrogenase-4 component C</fullName>
        <ecNumber>1.-.-.-</ecNumber>
    </recommendedName>
</protein>
<sequence length="315" mass="34359">MRQTLCDGYLVIFALAQAVILLMLTPLFTGISRQIRARMHSRRGPGIWQDYRDIHKLFKRQEVAPTSSGLMFRLMPWVLISSMLVLAMALPLFITVSPFAGGGDLITLIYLLALFRFFFALSGLDTGSPFAGVGASRELTLGILVEPMLILSLLVLALIAGSTHIEMISNTLAMGWNSPLTTVLALLACGFACFIEMGKIPFDVAEAEQELQEGPLTEYSGAGLALAKWGLGLKQVVMASLFVALFLPFGRAQELSLACLLTSLVVTLLKVLLIFVLASIAENTLARGRFLLIHHVTWLGFSLAALAWVFWLTGL</sequence>
<keyword id="KW-0997">Cell inner membrane</keyword>
<keyword id="KW-1003">Cell membrane</keyword>
<keyword id="KW-0472">Membrane</keyword>
<keyword id="KW-0520">NAD</keyword>
<keyword id="KW-0560">Oxidoreductase</keyword>
<keyword id="KW-1185">Reference proteome</keyword>
<keyword id="KW-0812">Transmembrane</keyword>
<keyword id="KW-1133">Transmembrane helix</keyword>
<dbReference type="EC" id="1.-.-.-"/>
<dbReference type="EMBL" id="M63654">
    <property type="protein sequence ID" value="AAB88565.1"/>
    <property type="molecule type" value="Genomic_DNA"/>
</dbReference>
<dbReference type="EMBL" id="U00096">
    <property type="protein sequence ID" value="AAC75536.2"/>
    <property type="molecule type" value="Genomic_DNA"/>
</dbReference>
<dbReference type="EMBL" id="AP009048">
    <property type="protein sequence ID" value="BAA16361.2"/>
    <property type="molecule type" value="Genomic_DNA"/>
</dbReference>
<dbReference type="PIR" id="B65024">
    <property type="entry name" value="B65024"/>
</dbReference>
<dbReference type="RefSeq" id="NP_416978.4">
    <property type="nucleotide sequence ID" value="NC_000913.3"/>
</dbReference>
<dbReference type="RefSeq" id="WP_001311024.1">
    <property type="nucleotide sequence ID" value="NZ_STEB01000011.1"/>
</dbReference>
<dbReference type="SMR" id="P77858"/>
<dbReference type="BioGRID" id="4259197">
    <property type="interactions" value="10"/>
</dbReference>
<dbReference type="ComplexPortal" id="CPX-6028">
    <property type="entry name" value="Formate hydrogenlyase-H/Hydrogenase-4 complex"/>
</dbReference>
<dbReference type="FunCoup" id="P77858">
    <property type="interactions" value="140"/>
</dbReference>
<dbReference type="STRING" id="511145.b2483"/>
<dbReference type="TCDB" id="3.D.1.9.1">
    <property type="family name" value="the h+ or na+-translocating nadh dehydrogenase (ndh) family"/>
</dbReference>
<dbReference type="PaxDb" id="511145-b2483"/>
<dbReference type="EnsemblBacteria" id="AAC75536">
    <property type="protein sequence ID" value="AAC75536"/>
    <property type="gene ID" value="b2483"/>
</dbReference>
<dbReference type="GeneID" id="947492"/>
<dbReference type="KEGG" id="ecj:JW2468"/>
<dbReference type="KEGG" id="eco:b2483"/>
<dbReference type="KEGG" id="ecoc:C3026_13780"/>
<dbReference type="PATRIC" id="fig|1411691.4.peg.4256"/>
<dbReference type="EchoBASE" id="EB3963"/>
<dbReference type="eggNOG" id="COG0650">
    <property type="taxonomic scope" value="Bacteria"/>
</dbReference>
<dbReference type="HOGENOM" id="CLU_015134_2_1_6"/>
<dbReference type="InParanoid" id="P77858"/>
<dbReference type="OMA" id="IHEAMIL"/>
<dbReference type="OrthoDB" id="9778499at2"/>
<dbReference type="PhylomeDB" id="P77858"/>
<dbReference type="BioCyc" id="EcoCyc:MONOMER0-154"/>
<dbReference type="PRO" id="PR:P77858"/>
<dbReference type="Proteomes" id="UP000000625">
    <property type="component" value="Chromosome"/>
</dbReference>
<dbReference type="GO" id="GO:0009326">
    <property type="term" value="C:formate dehydrogenase complex"/>
    <property type="evidence" value="ECO:0000318"/>
    <property type="project" value="GO_Central"/>
</dbReference>
<dbReference type="GO" id="GO:0016020">
    <property type="term" value="C:membrane"/>
    <property type="evidence" value="ECO:0000303"/>
    <property type="project" value="ComplexPortal"/>
</dbReference>
<dbReference type="GO" id="GO:0005886">
    <property type="term" value="C:plasma membrane"/>
    <property type="evidence" value="ECO:0000255"/>
    <property type="project" value="EcoCyc"/>
</dbReference>
<dbReference type="GO" id="GO:0016491">
    <property type="term" value="F:oxidoreductase activity"/>
    <property type="evidence" value="ECO:0007669"/>
    <property type="project" value="UniProtKB-KW"/>
</dbReference>
<dbReference type="GO" id="GO:0019645">
    <property type="term" value="P:anaerobic electron transport chain"/>
    <property type="evidence" value="ECO:0000318"/>
    <property type="project" value="GO_Central"/>
</dbReference>
<dbReference type="GO" id="GO:0009061">
    <property type="term" value="P:anaerobic respiration"/>
    <property type="evidence" value="ECO:0000303"/>
    <property type="project" value="ComplexPortal"/>
</dbReference>
<dbReference type="GO" id="GO:0006974">
    <property type="term" value="P:DNA damage response"/>
    <property type="evidence" value="ECO:0000270"/>
    <property type="project" value="EcoliWiki"/>
</dbReference>
<dbReference type="GO" id="GO:0015944">
    <property type="term" value="P:formate oxidation"/>
    <property type="evidence" value="ECO:0000303"/>
    <property type="project" value="ComplexPortal"/>
</dbReference>
<dbReference type="GO" id="GO:0006007">
    <property type="term" value="P:glucose catabolic process"/>
    <property type="evidence" value="ECO:0000303"/>
    <property type="project" value="ComplexPortal"/>
</dbReference>
<dbReference type="InterPro" id="IPR052561">
    <property type="entry name" value="ComplexI_Subunit1"/>
</dbReference>
<dbReference type="InterPro" id="IPR001694">
    <property type="entry name" value="NADH_UbQ_OxRdtase_su1/FPO"/>
</dbReference>
<dbReference type="InterPro" id="IPR018086">
    <property type="entry name" value="NADH_UbQ_OxRdtase_su1_CS"/>
</dbReference>
<dbReference type="PANTHER" id="PTHR43359">
    <property type="entry name" value="FORMATE HYDROGENLYASE SUBUNIT 4"/>
    <property type="match status" value="1"/>
</dbReference>
<dbReference type="PANTHER" id="PTHR43359:SF1">
    <property type="entry name" value="FORMATE HYDROGENLYASE SUBUNIT 4-RELATED"/>
    <property type="match status" value="1"/>
</dbReference>
<dbReference type="Pfam" id="PF00146">
    <property type="entry name" value="NADHdh"/>
    <property type="match status" value="1"/>
</dbReference>
<dbReference type="PROSITE" id="PS00668">
    <property type="entry name" value="COMPLEX1_ND1_2"/>
    <property type="match status" value="1"/>
</dbReference>
<feature type="chain" id="PRO_0000117535" description="Hydrogenase-4 component C">
    <location>
        <begin position="1"/>
        <end position="315"/>
    </location>
</feature>
<feature type="topological domain" description="Periplasmic" evidence="1">
    <location>
        <begin position="1"/>
        <end position="10"/>
    </location>
</feature>
<feature type="transmembrane region" description="Helical" evidence="1">
    <location>
        <begin position="11"/>
        <end position="31"/>
    </location>
</feature>
<feature type="topological domain" description="Cytoplasmic" evidence="1">
    <location>
        <begin position="32"/>
        <end position="73"/>
    </location>
</feature>
<feature type="transmembrane region" description="Helical" evidence="1">
    <location>
        <begin position="74"/>
        <end position="94"/>
    </location>
</feature>
<feature type="topological domain" description="Periplasmic" evidence="1">
    <location>
        <begin position="95"/>
        <end position="98"/>
    </location>
</feature>
<feature type="transmembrane region" description="Helical" evidence="1">
    <location>
        <begin position="99"/>
        <end position="119"/>
    </location>
</feature>
<feature type="topological domain" description="Cytoplasmic" evidence="1">
    <location>
        <begin position="120"/>
        <end position="140"/>
    </location>
</feature>
<feature type="transmembrane region" description="Helical" evidence="1">
    <location>
        <begin position="141"/>
        <end position="161"/>
    </location>
</feature>
<feature type="topological domain" description="Periplasmic" evidence="1">
    <location>
        <begin position="162"/>
        <end position="181"/>
    </location>
</feature>
<feature type="transmembrane region" description="Helical" evidence="1">
    <location>
        <begin position="182"/>
        <end position="202"/>
    </location>
</feature>
<feature type="topological domain" description="Cytoplasmic" evidence="1">
    <location>
        <begin position="203"/>
        <end position="228"/>
    </location>
</feature>
<feature type="transmembrane region" description="Helical" evidence="1">
    <location>
        <begin position="229"/>
        <end position="249"/>
    </location>
</feature>
<feature type="topological domain" description="Periplasmic" evidence="1">
    <location>
        <begin position="250"/>
        <end position="256"/>
    </location>
</feature>
<feature type="transmembrane region" description="Helical" evidence="1">
    <location>
        <begin position="257"/>
        <end position="277"/>
    </location>
</feature>
<feature type="topological domain" description="Cytoplasmic" evidence="1">
    <location>
        <begin position="278"/>
        <end position="289"/>
    </location>
</feature>
<feature type="transmembrane region" description="Helical" evidence="1">
    <location>
        <begin position="290"/>
        <end position="310"/>
    </location>
</feature>
<feature type="topological domain" description="Periplasmic" evidence="1 2">
    <location>
        <begin position="311"/>
        <end position="315"/>
    </location>
</feature>
<accession>P77858</accession>
<accession>P78262</accession>
<evidence type="ECO:0000255" key="1"/>
<evidence type="ECO:0000269" key="2">
    <source>
    </source>
</evidence>
<evidence type="ECO:0000303" key="3">
    <source>
    </source>
</evidence>
<evidence type="ECO:0000305" key="4"/>
<evidence type="ECO:0000305" key="5">
    <source>
    </source>
</evidence>
<comment type="function">
    <text evidence="5">Possible component of hydrogenase 4.</text>
</comment>
<comment type="subcellular location">
    <subcellularLocation>
        <location evidence="2">Cell inner membrane</location>
        <topology>Multi-pass membrane protein</topology>
    </subcellularLocation>
</comment>
<comment type="similarity">
    <text evidence="4">Belongs to the complex I subunit 1 family.</text>
</comment>
<gene>
    <name evidence="3" type="primary">hyfC</name>
    <name type="ordered locus">b2483</name>
    <name type="ordered locus">JW2468</name>
</gene>
<reference key="1">
    <citation type="journal article" date="1997" name="Microbiology">
        <title>A 12-cistron Escherichia coli operon (hyf) encoding a putative proton-translocating formate hydrogenlyase system.</title>
        <authorList>
            <person name="Andrews S.C."/>
            <person name="Berks B.C."/>
            <person name="McClay J."/>
            <person name="Ambler A."/>
            <person name="Quail M.A."/>
            <person name="Golby P."/>
            <person name="Guest J.R."/>
        </authorList>
    </citation>
    <scope>NUCLEOTIDE SEQUENCE [GENOMIC DNA]</scope>
    <scope>POSSIBLE FUNCTION</scope>
    <source>
        <strain>K12</strain>
    </source>
</reference>
<reference key="2">
    <citation type="journal article" date="1997" name="DNA Res.">
        <title>Construction of a contiguous 874-kb sequence of the Escherichia coli-K12 genome corresponding to 50.0-68.8 min on the linkage map and analysis of its sequence features.</title>
        <authorList>
            <person name="Yamamoto Y."/>
            <person name="Aiba H."/>
            <person name="Baba T."/>
            <person name="Hayashi K."/>
            <person name="Inada T."/>
            <person name="Isono K."/>
            <person name="Itoh T."/>
            <person name="Kimura S."/>
            <person name="Kitagawa M."/>
            <person name="Makino K."/>
            <person name="Miki T."/>
            <person name="Mitsuhashi N."/>
            <person name="Mizobuchi K."/>
            <person name="Mori H."/>
            <person name="Nakade S."/>
            <person name="Nakamura Y."/>
            <person name="Nashimoto H."/>
            <person name="Oshima T."/>
            <person name="Oyama S."/>
            <person name="Saito N."/>
            <person name="Sampei G."/>
            <person name="Satoh Y."/>
            <person name="Sivasundaram S."/>
            <person name="Tagami H."/>
            <person name="Takahashi H."/>
            <person name="Takeda J."/>
            <person name="Takemoto K."/>
            <person name="Uehara K."/>
            <person name="Wada C."/>
            <person name="Yamagata S."/>
            <person name="Horiuchi T."/>
        </authorList>
    </citation>
    <scope>NUCLEOTIDE SEQUENCE [LARGE SCALE GENOMIC DNA]</scope>
    <source>
        <strain>K12 / W3110 / ATCC 27325 / DSM 5911</strain>
    </source>
</reference>
<reference key="3">
    <citation type="journal article" date="1997" name="Science">
        <title>The complete genome sequence of Escherichia coli K-12.</title>
        <authorList>
            <person name="Blattner F.R."/>
            <person name="Plunkett G. III"/>
            <person name="Bloch C.A."/>
            <person name="Perna N.T."/>
            <person name="Burland V."/>
            <person name="Riley M."/>
            <person name="Collado-Vides J."/>
            <person name="Glasner J.D."/>
            <person name="Rode C.K."/>
            <person name="Mayhew G.F."/>
            <person name="Gregor J."/>
            <person name="Davis N.W."/>
            <person name="Kirkpatrick H.A."/>
            <person name="Goeden M.A."/>
            <person name="Rose D.J."/>
            <person name="Mau B."/>
            <person name="Shao Y."/>
        </authorList>
    </citation>
    <scope>NUCLEOTIDE SEQUENCE [LARGE SCALE GENOMIC DNA]</scope>
    <source>
        <strain>K12 / MG1655 / ATCC 47076</strain>
    </source>
</reference>
<reference key="4">
    <citation type="journal article" date="2006" name="Mol. Syst. Biol.">
        <title>Highly accurate genome sequences of Escherichia coli K-12 strains MG1655 and W3110.</title>
        <authorList>
            <person name="Hayashi K."/>
            <person name="Morooka N."/>
            <person name="Yamamoto Y."/>
            <person name="Fujita K."/>
            <person name="Isono K."/>
            <person name="Choi S."/>
            <person name="Ohtsubo E."/>
            <person name="Baba T."/>
            <person name="Wanner B.L."/>
            <person name="Mori H."/>
            <person name="Horiuchi T."/>
        </authorList>
    </citation>
    <scope>NUCLEOTIDE SEQUENCE [LARGE SCALE GENOMIC DNA]</scope>
    <source>
        <strain>K12 / W3110 / ATCC 27325 / DSM 5911</strain>
    </source>
</reference>
<reference key="5">
    <citation type="journal article" date="2005" name="Science">
        <title>Global topology analysis of the Escherichia coli inner membrane proteome.</title>
        <authorList>
            <person name="Daley D.O."/>
            <person name="Rapp M."/>
            <person name="Granseth E."/>
            <person name="Melen K."/>
            <person name="Drew D."/>
            <person name="von Heijne G."/>
        </authorList>
    </citation>
    <scope>SUBCELLULAR LOCATION</scope>
    <scope>TOPOLOGY [LARGE SCALE ANALYSIS]</scope>
    <source>
        <strain>K12 / MG1655 / ATCC 47076</strain>
    </source>
</reference>
<name>HYFC_ECOLI</name>
<proteinExistence type="evidence at protein level"/>
<organism>
    <name type="scientific">Escherichia coli (strain K12)</name>
    <dbReference type="NCBI Taxonomy" id="83333"/>
    <lineage>
        <taxon>Bacteria</taxon>
        <taxon>Pseudomonadati</taxon>
        <taxon>Pseudomonadota</taxon>
        <taxon>Gammaproteobacteria</taxon>
        <taxon>Enterobacterales</taxon>
        <taxon>Enterobacteriaceae</taxon>
        <taxon>Escherichia</taxon>
    </lineage>
</organism>